<proteinExistence type="evidence at protein level"/>
<comment type="function">
    <text evidence="5">Promotes AKT phosphorylation, suggesting a possible role in the PI3K-AKT signaling pathway.</text>
</comment>
<comment type="interaction">
    <interactant intactId="EBI-8563667">
        <id>Q96S96</id>
    </interactant>
    <interactant intactId="EBI-296087">
        <id>P31749</id>
        <label>AKT1</label>
    </interactant>
    <organismsDiffer>false</organismsDiffer>
    <experiments>2</experiments>
</comment>
<comment type="interaction">
    <interactant intactId="EBI-8563667">
        <id>Q96S96</id>
    </interactant>
    <interactant intactId="EBI-365996">
        <id>P04049</id>
        <label>RAF1</label>
    </interactant>
    <organismsDiffer>false</organismsDiffer>
    <experiments>4</experiments>
</comment>
<comment type="subcellular location">
    <subcellularLocation>
        <location evidence="5">Secreted</location>
    </subcellularLocation>
</comment>
<comment type="similarity">
    <text evidence="7">Belongs to the phosphatidylethanolamine-binding protein family.</text>
</comment>
<comment type="caution">
    <text evidence="8 9">It was previously reported that PEBP4 is a lysosomal protein which is highly expressed in tumor cells, and may promote cellular resistance to TNF-induced apoptosis. However the paper has since been retracted by the journal due to concerns of image manipulation.</text>
</comment>
<comment type="sequence caution" evidence="7">
    <conflict type="frameshift">
        <sequence resource="EMBL-CDS" id="AAH20779"/>
    </conflict>
</comment>
<comment type="sequence caution" evidence="7">
    <conflict type="frameshift">
        <sequence resource="EMBL-CDS" id="AAQ89467"/>
    </conflict>
</comment>
<feature type="signal peptide" evidence="3">
    <location>
        <begin position="1"/>
        <end position="22"/>
    </location>
</feature>
<feature type="chain" id="PRO_0000023279" description="Phosphatidylethanolamine-binding protein 4">
    <location>
        <begin position="23"/>
        <end position="227"/>
    </location>
</feature>
<feature type="region of interest" description="Important for secretion" evidence="5">
    <location>
        <begin position="188"/>
        <end position="227"/>
    </location>
</feature>
<feature type="region of interest" description="Disordered" evidence="1">
    <location>
        <begin position="202"/>
        <end position="227"/>
    </location>
</feature>
<feature type="compositionally biased region" description="Basic and acidic residues" evidence="1">
    <location>
        <begin position="209"/>
        <end position="221"/>
    </location>
</feature>
<feature type="glycosylation site" description="N-linked (GlcNAc...) (complex) asparagine" evidence="5">
    <location>
        <position position="169"/>
    </location>
</feature>
<feature type="sequence variant" id="VAR_050467" description="In dbSNP:rs1129474." evidence="4 6">
    <original>K</original>
    <variation>E</variation>
    <location>
        <position position="125"/>
    </location>
</feature>
<feature type="sequence variant" id="VAR_050468" description="In dbSNP:rs1047406." evidence="2 4">
    <original>E</original>
    <variation>G</variation>
    <location>
        <position position="211"/>
    </location>
</feature>
<reference key="1">
    <citation type="submission" date="2004-08" db="EMBL/GenBank/DDBJ databases">
        <title>Cousin-of-RKIP 1 promotes myoblast differentiation.</title>
        <authorList>
            <person name="Garcia R.L."/>
            <person name="Fee F."/>
            <person name="Kolch W."/>
        </authorList>
    </citation>
    <scope>NUCLEOTIDE SEQUENCE [MRNA]</scope>
    <scope>VARIANT GLU-125</scope>
</reference>
<reference key="2">
    <citation type="journal article" date="2003" name="Genome Res.">
        <title>The secreted protein discovery initiative (SPDI), a large-scale effort to identify novel human secreted and transmembrane proteins: a bioinformatics assessment.</title>
        <authorList>
            <person name="Clark H.F."/>
            <person name="Gurney A.L."/>
            <person name="Abaya E."/>
            <person name="Baker K."/>
            <person name="Baldwin D.T."/>
            <person name="Brush J."/>
            <person name="Chen J."/>
            <person name="Chow B."/>
            <person name="Chui C."/>
            <person name="Crowley C."/>
            <person name="Currell B."/>
            <person name="Deuel B."/>
            <person name="Dowd P."/>
            <person name="Eaton D."/>
            <person name="Foster J.S."/>
            <person name="Grimaldi C."/>
            <person name="Gu Q."/>
            <person name="Hass P.E."/>
            <person name="Heldens S."/>
            <person name="Huang A."/>
            <person name="Kim H.S."/>
            <person name="Klimowski L."/>
            <person name="Jin Y."/>
            <person name="Johnson S."/>
            <person name="Lee J."/>
            <person name="Lewis L."/>
            <person name="Liao D."/>
            <person name="Mark M.R."/>
            <person name="Robbie E."/>
            <person name="Sanchez C."/>
            <person name="Schoenfeld J."/>
            <person name="Seshagiri S."/>
            <person name="Simmons L."/>
            <person name="Singh J."/>
            <person name="Smith V."/>
            <person name="Stinson J."/>
            <person name="Vagts A."/>
            <person name="Vandlen R.L."/>
            <person name="Watanabe C."/>
            <person name="Wieand D."/>
            <person name="Woods K."/>
            <person name="Xie M.-H."/>
            <person name="Yansura D.G."/>
            <person name="Yi S."/>
            <person name="Yu G."/>
            <person name="Yuan J."/>
            <person name="Zhang M."/>
            <person name="Zhang Z."/>
            <person name="Goddard A.D."/>
            <person name="Wood W.I."/>
            <person name="Godowski P.J."/>
            <person name="Gray A.M."/>
        </authorList>
    </citation>
    <scope>NUCLEOTIDE SEQUENCE [LARGE SCALE MRNA]</scope>
    <scope>VARIANT GLY-211</scope>
</reference>
<reference key="3">
    <citation type="journal article" date="2004" name="Genome Res.">
        <title>The status, quality, and expansion of the NIH full-length cDNA project: the Mammalian Gene Collection (MGC).</title>
        <authorList>
            <consortium name="The MGC Project Team"/>
        </authorList>
    </citation>
    <scope>NUCLEOTIDE SEQUENCE [LARGE SCALE MRNA]</scope>
    <scope>VARIANTS GLU-125 AND GLY-211</scope>
    <source>
        <tissue>Lung</tissue>
    </source>
</reference>
<reference key="4">
    <citation type="journal article" date="2004" name="Protein Sci.">
        <title>Signal peptide prediction based on analysis of experimentally verified cleavage sites.</title>
        <authorList>
            <person name="Zhang Z."/>
            <person name="Henzel W.J."/>
        </authorList>
    </citation>
    <scope>PROTEIN SEQUENCE OF 23-37</scope>
</reference>
<reference key="5">
    <citation type="journal article" date="2004" name="J. Biol. Chem.">
        <title>A novel human phosphatidylethanolamine-binding protein resists tumor necrosis factor alpha-induced apoptosis by inhibiting mitogen-activated protein kinase pathway activation and phosphatidylethanolamine externalization.</title>
        <authorList>
            <person name="Wang X."/>
            <person name="Li N."/>
            <person name="Liu B."/>
            <person name="Sun H."/>
            <person name="Chen T."/>
            <person name="Li H."/>
            <person name="Qiu J."/>
            <person name="Zhang L."/>
            <person name="Wan T."/>
            <person name="Cao X."/>
        </authorList>
    </citation>
    <scope>RETRACTED PAPER</scope>
</reference>
<reference key="6">
    <citation type="journal article" date="2020" name="J. Biol. Chem.">
        <authorList>
            <person name="Wang X."/>
            <person name="Li N."/>
            <person name="Liu B."/>
            <person name="Sun H."/>
            <person name="Chen T."/>
            <person name="Li H."/>
            <person name="Qiu J."/>
            <person name="Zhang L."/>
            <person name="Wan T."/>
            <person name="Cao X."/>
        </authorList>
    </citation>
    <scope>RETRACTION NOTICE OF PUBMED:15302887</scope>
</reference>
<reference key="7">
    <citation type="journal article" date="2016" name="Biochim. Biophys. Acta">
        <title>Phosphatidylethanolamine binding protein 4 (PEBP4) is a secreted protein and has multiple functions.</title>
        <authorList>
            <person name="He H."/>
            <person name="Liu D."/>
            <person name="Lin H."/>
            <person name="Jiang S."/>
            <person name="Ying Y."/>
            <person name="Chun S."/>
            <person name="Deng H."/>
            <person name="Zaia J."/>
            <person name="Wen R."/>
            <person name="Luo Z."/>
        </authorList>
    </citation>
    <scope>FUNCTION</scope>
    <scope>SUBCELLULAR LOCATION</scope>
    <scope>GLYCOSYLATION AT ASN-169</scope>
</reference>
<organism>
    <name type="scientific">Homo sapiens</name>
    <name type="common">Human</name>
    <dbReference type="NCBI Taxonomy" id="9606"/>
    <lineage>
        <taxon>Eukaryota</taxon>
        <taxon>Metazoa</taxon>
        <taxon>Chordata</taxon>
        <taxon>Craniata</taxon>
        <taxon>Vertebrata</taxon>
        <taxon>Euteleostomi</taxon>
        <taxon>Mammalia</taxon>
        <taxon>Eutheria</taxon>
        <taxon>Euarchontoglires</taxon>
        <taxon>Primates</taxon>
        <taxon>Haplorrhini</taxon>
        <taxon>Catarrhini</taxon>
        <taxon>Hominidae</taxon>
        <taxon>Homo</taxon>
    </lineage>
</organism>
<accession>Q96S96</accession>
<accession>Q5EVA1</accession>
<accession>Q8WW74</accession>
<protein>
    <recommendedName>
        <fullName>Phosphatidylethanolamine-binding protein 4</fullName>
        <shortName>PEBP-4</shortName>
        <shortName>hPEBP4</shortName>
    </recommendedName>
    <alternativeName>
        <fullName>Protein cousin-of-RKIP 1</fullName>
    </alternativeName>
</protein>
<dbReference type="EMBL" id="AY037148">
    <property type="protein sequence ID" value="AAK67629.1"/>
    <property type="molecule type" value="mRNA"/>
</dbReference>
<dbReference type="EMBL" id="AY730275">
    <property type="protein sequence ID" value="AAW56965.1"/>
    <property type="molecule type" value="mRNA"/>
</dbReference>
<dbReference type="EMBL" id="AY359109">
    <property type="protein sequence ID" value="AAQ89467.1"/>
    <property type="status" value="ALT_FRAME"/>
    <property type="molecule type" value="mRNA"/>
</dbReference>
<dbReference type="EMBL" id="BC020779">
    <property type="protein sequence ID" value="AAH20779.1"/>
    <property type="status" value="ALT_FRAME"/>
    <property type="molecule type" value="mRNA"/>
</dbReference>
<dbReference type="CCDS" id="CCDS43724.1"/>
<dbReference type="RefSeq" id="NP_001350162.1">
    <property type="nucleotide sequence ID" value="NM_001363233.2"/>
</dbReference>
<dbReference type="RefSeq" id="NP_659399.2">
    <property type="nucleotide sequence ID" value="NM_144962.3"/>
</dbReference>
<dbReference type="RefSeq" id="XP_011542716.1">
    <property type="nucleotide sequence ID" value="XM_011544414.2"/>
</dbReference>
<dbReference type="SMR" id="Q96S96"/>
<dbReference type="BioGRID" id="127592">
    <property type="interactions" value="4"/>
</dbReference>
<dbReference type="FunCoup" id="Q96S96">
    <property type="interactions" value="45"/>
</dbReference>
<dbReference type="IntAct" id="Q96S96">
    <property type="interactions" value="4"/>
</dbReference>
<dbReference type="MINT" id="Q96S96"/>
<dbReference type="STRING" id="9606.ENSP00000256404"/>
<dbReference type="GlyCosmos" id="Q96S96">
    <property type="glycosylation" value="1 site, No reported glycans"/>
</dbReference>
<dbReference type="GlyGen" id="Q96S96">
    <property type="glycosylation" value="1 site"/>
</dbReference>
<dbReference type="iPTMnet" id="Q96S96"/>
<dbReference type="BioMuta" id="PEBP4"/>
<dbReference type="DMDM" id="143811436"/>
<dbReference type="jPOST" id="Q96S96"/>
<dbReference type="MassIVE" id="Q96S96"/>
<dbReference type="PaxDb" id="9606-ENSP00000256404"/>
<dbReference type="PeptideAtlas" id="Q96S96"/>
<dbReference type="ProteomicsDB" id="78091"/>
<dbReference type="Antibodypedia" id="5316">
    <property type="antibodies" value="124 antibodies from 23 providers"/>
</dbReference>
<dbReference type="DNASU" id="157310"/>
<dbReference type="Ensembl" id="ENST00000256404.8">
    <property type="protein sequence ID" value="ENSP00000256404.6"/>
    <property type="gene ID" value="ENSG00000134020.8"/>
</dbReference>
<dbReference type="GeneID" id="157310"/>
<dbReference type="KEGG" id="hsa:157310"/>
<dbReference type="MANE-Select" id="ENST00000256404.8">
    <property type="protein sequence ID" value="ENSP00000256404.6"/>
    <property type="RefSeq nucleotide sequence ID" value="NM_144962.3"/>
    <property type="RefSeq protein sequence ID" value="NP_659399.2"/>
</dbReference>
<dbReference type="UCSC" id="uc003xcn.2">
    <property type="organism name" value="human"/>
</dbReference>
<dbReference type="AGR" id="HGNC:28319"/>
<dbReference type="CTD" id="157310"/>
<dbReference type="DisGeNET" id="157310"/>
<dbReference type="GeneCards" id="PEBP4"/>
<dbReference type="HGNC" id="HGNC:28319">
    <property type="gene designation" value="PEBP4"/>
</dbReference>
<dbReference type="HPA" id="ENSG00000134020">
    <property type="expression patterns" value="Tissue enhanced (epididymis, skeletal muscle, tongue)"/>
</dbReference>
<dbReference type="MIM" id="612473">
    <property type="type" value="gene"/>
</dbReference>
<dbReference type="neXtProt" id="NX_Q96S96"/>
<dbReference type="OpenTargets" id="ENSG00000134020"/>
<dbReference type="PharmGKB" id="PA165585814"/>
<dbReference type="VEuPathDB" id="HostDB:ENSG00000134020"/>
<dbReference type="eggNOG" id="KOG3346">
    <property type="taxonomic scope" value="Eukaryota"/>
</dbReference>
<dbReference type="GeneTree" id="ENSGT00940000162387"/>
<dbReference type="HOGENOM" id="CLU_089676_0_0_1"/>
<dbReference type="InParanoid" id="Q96S96"/>
<dbReference type="OMA" id="QKITSWM"/>
<dbReference type="OrthoDB" id="2506647at2759"/>
<dbReference type="PAN-GO" id="Q96S96">
    <property type="GO annotations" value="0 GO annotations based on evolutionary models"/>
</dbReference>
<dbReference type="PhylomeDB" id="Q96S96"/>
<dbReference type="TreeFam" id="TF315074"/>
<dbReference type="PathwayCommons" id="Q96S96"/>
<dbReference type="SignaLink" id="Q96S96"/>
<dbReference type="BioGRID-ORCS" id="157310">
    <property type="hits" value="13 hits in 1143 CRISPR screens"/>
</dbReference>
<dbReference type="ChiTaRS" id="PEBP4">
    <property type="organism name" value="human"/>
</dbReference>
<dbReference type="GenomeRNAi" id="157310"/>
<dbReference type="Pharos" id="Q96S96">
    <property type="development level" value="Tbio"/>
</dbReference>
<dbReference type="PRO" id="PR:Q96S96"/>
<dbReference type="Proteomes" id="UP000005640">
    <property type="component" value="Chromosome 8"/>
</dbReference>
<dbReference type="RNAct" id="Q96S96">
    <property type="molecule type" value="protein"/>
</dbReference>
<dbReference type="Bgee" id="ENSG00000134020">
    <property type="expression patterns" value="Expressed in vastus lateralis and 138 other cell types or tissues"/>
</dbReference>
<dbReference type="ExpressionAtlas" id="Q96S96">
    <property type="expression patterns" value="baseline and differential"/>
</dbReference>
<dbReference type="GO" id="GO:0070062">
    <property type="term" value="C:extracellular exosome"/>
    <property type="evidence" value="ECO:0007005"/>
    <property type="project" value="UniProtKB"/>
</dbReference>
<dbReference type="CDD" id="cd00866">
    <property type="entry name" value="PEBP_euk"/>
    <property type="match status" value="1"/>
</dbReference>
<dbReference type="FunFam" id="3.90.280.10:FF:000010">
    <property type="entry name" value="Phosphatidylethanolamine binding protein 4"/>
    <property type="match status" value="1"/>
</dbReference>
<dbReference type="Gene3D" id="3.90.280.10">
    <property type="entry name" value="PEBP-like"/>
    <property type="match status" value="1"/>
</dbReference>
<dbReference type="InterPro" id="IPR008914">
    <property type="entry name" value="PEBP"/>
</dbReference>
<dbReference type="InterPro" id="IPR036610">
    <property type="entry name" value="PEBP-like_sf"/>
</dbReference>
<dbReference type="InterPro" id="IPR035810">
    <property type="entry name" value="PEBP_euk"/>
</dbReference>
<dbReference type="InterPro" id="IPR001858">
    <property type="entry name" value="Phosphatidylethanolamine-bd_CS"/>
</dbReference>
<dbReference type="PANTHER" id="PTHR11362">
    <property type="entry name" value="PHOSPHATIDYLETHANOLAMINE-BINDING PROTEIN"/>
    <property type="match status" value="1"/>
</dbReference>
<dbReference type="PANTHER" id="PTHR11362:SF82">
    <property type="entry name" value="PHOSPHATIDYLETHANOLAMINE-BINDING PROTEIN 4"/>
    <property type="match status" value="1"/>
</dbReference>
<dbReference type="Pfam" id="PF01161">
    <property type="entry name" value="PBP"/>
    <property type="match status" value="1"/>
</dbReference>
<dbReference type="SUPFAM" id="SSF49777">
    <property type="entry name" value="PEBP-like"/>
    <property type="match status" value="1"/>
</dbReference>
<dbReference type="PROSITE" id="PS01220">
    <property type="entry name" value="PBP"/>
    <property type="match status" value="1"/>
</dbReference>
<keyword id="KW-0903">Direct protein sequencing</keyword>
<keyword id="KW-0325">Glycoprotein</keyword>
<keyword id="KW-1267">Proteomics identification</keyword>
<keyword id="KW-1185">Reference proteome</keyword>
<keyword id="KW-0964">Secreted</keyword>
<keyword id="KW-0732">Signal</keyword>
<gene>
    <name type="primary">PEBP4</name>
    <name type="synonym">CORK1</name>
    <name type="ORF">UNQ1933/PRO4408</name>
</gene>
<name>PEBP4_HUMAN</name>
<evidence type="ECO:0000256" key="1">
    <source>
        <dbReference type="SAM" id="MobiDB-lite"/>
    </source>
</evidence>
<evidence type="ECO:0000269" key="2">
    <source>
    </source>
</evidence>
<evidence type="ECO:0000269" key="3">
    <source>
    </source>
</evidence>
<evidence type="ECO:0000269" key="4">
    <source>
    </source>
</evidence>
<evidence type="ECO:0000269" key="5">
    <source>
    </source>
</evidence>
<evidence type="ECO:0000269" key="6">
    <source ref="1"/>
</evidence>
<evidence type="ECO:0000305" key="7"/>
<evidence type="ECO:0000305" key="8">
    <source>
    </source>
</evidence>
<evidence type="ECO:0000305" key="9">
    <source>
    </source>
</evidence>
<sequence>MGWTMRLVTAALLLGLMMVVTGDEDENSPCAHEALLDEDTLFCQGLEVFYPELGNIGCKVVPDCNNYRQKITSWMEPIVKFPGAVDGATYILVMVDPDAPSRAEPRQRFWRHWLVTDIKGADLKKGKIQGQELSAYQAPSPPAHSGFHRYQFFVYLQEGKVISLLPKENKTRGSWKMDRFLNRFHLGEPEASTQFMTQNYQDSPTLQAPRERASEPKHKNQAEIAAC</sequence>